<feature type="chain" id="PRO_0000261072" description="Ribose import ATP-binding protein RbsA">
    <location>
        <begin position="1"/>
        <end position="492"/>
    </location>
</feature>
<feature type="domain" description="ABC transporter 1" evidence="1">
    <location>
        <begin position="3"/>
        <end position="239"/>
    </location>
</feature>
<feature type="domain" description="ABC transporter 2" evidence="1">
    <location>
        <begin position="249"/>
        <end position="492"/>
    </location>
</feature>
<feature type="binding site" evidence="1">
    <location>
        <begin position="35"/>
        <end position="42"/>
    </location>
    <ligand>
        <name>ATP</name>
        <dbReference type="ChEBI" id="CHEBI:30616"/>
    </ligand>
</feature>
<protein>
    <recommendedName>
        <fullName evidence="1">Ribose import ATP-binding protein RbsA</fullName>
        <ecNumber evidence="1">7.5.2.7</ecNumber>
    </recommendedName>
</protein>
<accession>Q9CF44</accession>
<proteinExistence type="inferred from homology"/>
<comment type="function">
    <text evidence="1">Part of the ABC transporter complex RbsABC involved in ribose import. Responsible for energy coupling to the transport system.</text>
</comment>
<comment type="catalytic activity">
    <reaction evidence="1">
        <text>D-ribose(out) + ATP + H2O = D-ribose(in) + ADP + phosphate + H(+)</text>
        <dbReference type="Rhea" id="RHEA:29903"/>
        <dbReference type="ChEBI" id="CHEBI:15377"/>
        <dbReference type="ChEBI" id="CHEBI:15378"/>
        <dbReference type="ChEBI" id="CHEBI:30616"/>
        <dbReference type="ChEBI" id="CHEBI:43474"/>
        <dbReference type="ChEBI" id="CHEBI:47013"/>
        <dbReference type="ChEBI" id="CHEBI:456216"/>
        <dbReference type="EC" id="7.5.2.7"/>
    </reaction>
</comment>
<comment type="subunit">
    <text evidence="1">The complex is composed of an ATP-binding protein (RbsA), two transmembrane proteins (RbsC) and a solute-binding protein (RbsB).</text>
</comment>
<comment type="subcellular location">
    <subcellularLocation>
        <location evidence="1">Cell membrane</location>
        <topology evidence="1">Peripheral membrane protein</topology>
    </subcellularLocation>
</comment>
<comment type="similarity">
    <text evidence="1">Belongs to the ABC transporter superfamily. Ribose importer (TC 3.A.1.2.1) family.</text>
</comment>
<keyword id="KW-0067">ATP-binding</keyword>
<keyword id="KW-1003">Cell membrane</keyword>
<keyword id="KW-0472">Membrane</keyword>
<keyword id="KW-0547">Nucleotide-binding</keyword>
<keyword id="KW-1185">Reference proteome</keyword>
<keyword id="KW-0677">Repeat</keyword>
<keyword id="KW-0762">Sugar transport</keyword>
<keyword id="KW-1278">Translocase</keyword>
<keyword id="KW-0813">Transport</keyword>
<name>RBSA_LACLA</name>
<gene>
    <name evidence="1" type="primary">rbsA</name>
    <name type="ordered locus">LL1637</name>
    <name type="ORF">L84240</name>
</gene>
<dbReference type="EC" id="7.5.2.7" evidence="1"/>
<dbReference type="EMBL" id="AE005176">
    <property type="protein sequence ID" value="AAK05735.1"/>
    <property type="molecule type" value="Genomic_DNA"/>
</dbReference>
<dbReference type="PIR" id="E86829">
    <property type="entry name" value="E86829"/>
</dbReference>
<dbReference type="RefSeq" id="NP_267793.1">
    <property type="nucleotide sequence ID" value="NC_002662.1"/>
</dbReference>
<dbReference type="RefSeq" id="WP_010906071.1">
    <property type="nucleotide sequence ID" value="NC_002662.1"/>
</dbReference>
<dbReference type="SMR" id="Q9CF44"/>
<dbReference type="PaxDb" id="272623-L84240"/>
<dbReference type="EnsemblBacteria" id="AAK05735">
    <property type="protein sequence ID" value="AAK05735"/>
    <property type="gene ID" value="L84240"/>
</dbReference>
<dbReference type="KEGG" id="lla:L84240"/>
<dbReference type="PATRIC" id="fig|272623.7.peg.1759"/>
<dbReference type="eggNOG" id="COG1129">
    <property type="taxonomic scope" value="Bacteria"/>
</dbReference>
<dbReference type="HOGENOM" id="CLU_000604_92_3_9"/>
<dbReference type="OrthoDB" id="9771863at2"/>
<dbReference type="Proteomes" id="UP000002196">
    <property type="component" value="Chromosome"/>
</dbReference>
<dbReference type="GO" id="GO:0005886">
    <property type="term" value="C:plasma membrane"/>
    <property type="evidence" value="ECO:0007669"/>
    <property type="project" value="UniProtKB-SubCell"/>
</dbReference>
<dbReference type="GO" id="GO:0015611">
    <property type="term" value="F:ABC-type D-ribose transporter activity"/>
    <property type="evidence" value="ECO:0007669"/>
    <property type="project" value="UniProtKB-EC"/>
</dbReference>
<dbReference type="GO" id="GO:0005524">
    <property type="term" value="F:ATP binding"/>
    <property type="evidence" value="ECO:0007669"/>
    <property type="project" value="UniProtKB-KW"/>
</dbReference>
<dbReference type="GO" id="GO:0016887">
    <property type="term" value="F:ATP hydrolysis activity"/>
    <property type="evidence" value="ECO:0007669"/>
    <property type="project" value="InterPro"/>
</dbReference>
<dbReference type="CDD" id="cd03216">
    <property type="entry name" value="ABC_Carb_Monos_I"/>
    <property type="match status" value="1"/>
</dbReference>
<dbReference type="CDD" id="cd03215">
    <property type="entry name" value="ABC_Carb_Monos_II"/>
    <property type="match status" value="1"/>
</dbReference>
<dbReference type="FunFam" id="3.40.50.300:FF:000126">
    <property type="entry name" value="Galactose/methyl galactoside import ATP-binding protein MglA"/>
    <property type="match status" value="1"/>
</dbReference>
<dbReference type="FunFam" id="3.40.50.300:FF:000127">
    <property type="entry name" value="Ribose import ATP-binding protein RbsA"/>
    <property type="match status" value="1"/>
</dbReference>
<dbReference type="Gene3D" id="3.40.50.300">
    <property type="entry name" value="P-loop containing nucleotide triphosphate hydrolases"/>
    <property type="match status" value="2"/>
</dbReference>
<dbReference type="InterPro" id="IPR003593">
    <property type="entry name" value="AAA+_ATPase"/>
</dbReference>
<dbReference type="InterPro" id="IPR050107">
    <property type="entry name" value="ABC_carbohydrate_import_ATPase"/>
</dbReference>
<dbReference type="InterPro" id="IPR003439">
    <property type="entry name" value="ABC_transporter-like_ATP-bd"/>
</dbReference>
<dbReference type="InterPro" id="IPR017871">
    <property type="entry name" value="ABC_transporter-like_CS"/>
</dbReference>
<dbReference type="InterPro" id="IPR027417">
    <property type="entry name" value="P-loop_NTPase"/>
</dbReference>
<dbReference type="PANTHER" id="PTHR43790">
    <property type="entry name" value="CARBOHYDRATE TRANSPORT ATP-BINDING PROTEIN MG119-RELATED"/>
    <property type="match status" value="1"/>
</dbReference>
<dbReference type="PANTHER" id="PTHR43790:SF3">
    <property type="entry name" value="D-ALLOSE IMPORT ATP-BINDING PROTEIN ALSA-RELATED"/>
    <property type="match status" value="1"/>
</dbReference>
<dbReference type="Pfam" id="PF00005">
    <property type="entry name" value="ABC_tran"/>
    <property type="match status" value="2"/>
</dbReference>
<dbReference type="SMART" id="SM00382">
    <property type="entry name" value="AAA"/>
    <property type="match status" value="2"/>
</dbReference>
<dbReference type="SUPFAM" id="SSF52540">
    <property type="entry name" value="P-loop containing nucleoside triphosphate hydrolases"/>
    <property type="match status" value="2"/>
</dbReference>
<dbReference type="PROSITE" id="PS00211">
    <property type="entry name" value="ABC_TRANSPORTER_1"/>
    <property type="match status" value="2"/>
</dbReference>
<dbReference type="PROSITE" id="PS50893">
    <property type="entry name" value="ABC_TRANSPORTER_2"/>
    <property type="match status" value="2"/>
</dbReference>
<dbReference type="PROSITE" id="PS51254">
    <property type="entry name" value="RBSA"/>
    <property type="match status" value="1"/>
</dbReference>
<reference key="1">
    <citation type="journal article" date="2001" name="Genome Res.">
        <title>The complete genome sequence of the lactic acid bacterium Lactococcus lactis ssp. lactis IL1403.</title>
        <authorList>
            <person name="Bolotin A."/>
            <person name="Wincker P."/>
            <person name="Mauger S."/>
            <person name="Jaillon O."/>
            <person name="Malarme K."/>
            <person name="Weissenbach J."/>
            <person name="Ehrlich S.D."/>
            <person name="Sorokin A."/>
        </authorList>
    </citation>
    <scope>NUCLEOTIDE SEQUENCE [LARGE SCALE GENOMIC DNA]</scope>
    <source>
        <strain>IL1403</strain>
    </source>
</reference>
<sequence length="492" mass="54251">MKIEMKNISKSFGTNKVLEAIDLTINSGEVHALMGENGAGKSTLMNILTGLFPASGGEIEIDSEKKIFKNPQEAEGFGISFIHQEMNTWPDLTVLENLFLGREIKNKFGILDTKAMRKKANFAFEQLGVKIDLDKEIGNLSVGQQQMVEIAKSFLSDLKILIMDEPTAALTERETERLFSVIAGLKNQGVGIIYISHRMEEIFKITDCITVMRDGLVIDTQKTKETNVDELVRKMVGRSITDYYPPKNAEIREIVFEADHLSAEFFKDISFSVRSGEILGFAGLMGAGRTEVMRAIFGIDKLKSGTIKINGKSLTINNPAQAIKEGIGFLTEDRKDEGLVLDFSIKDNITLPSTKDFIHHGLFDDKTATTFVKQLSERLNVKATDEEQIVGSLSGGNQQKVVLAKWIGIAPKVLILDEPTRGVDVGAKREIYQLMNELAERGVPIIMISSDLPEILGVADRIAVMHEGEIAGILAKNEATQENVMQLATGGQ</sequence>
<organism>
    <name type="scientific">Lactococcus lactis subsp. lactis (strain IL1403)</name>
    <name type="common">Streptococcus lactis</name>
    <dbReference type="NCBI Taxonomy" id="272623"/>
    <lineage>
        <taxon>Bacteria</taxon>
        <taxon>Bacillati</taxon>
        <taxon>Bacillota</taxon>
        <taxon>Bacilli</taxon>
        <taxon>Lactobacillales</taxon>
        <taxon>Streptococcaceae</taxon>
        <taxon>Lactococcus</taxon>
    </lineage>
</organism>
<evidence type="ECO:0000255" key="1">
    <source>
        <dbReference type="HAMAP-Rule" id="MF_01716"/>
    </source>
</evidence>